<name>MIAA_BLOPB</name>
<keyword id="KW-0067">ATP-binding</keyword>
<keyword id="KW-0460">Magnesium</keyword>
<keyword id="KW-0547">Nucleotide-binding</keyword>
<keyword id="KW-1185">Reference proteome</keyword>
<keyword id="KW-0808">Transferase</keyword>
<keyword id="KW-0819">tRNA processing</keyword>
<evidence type="ECO:0000255" key="1">
    <source>
        <dbReference type="HAMAP-Rule" id="MF_00185"/>
    </source>
</evidence>
<protein>
    <recommendedName>
        <fullName evidence="1">tRNA dimethylallyltransferase</fullName>
        <ecNumber evidence="1">2.5.1.75</ecNumber>
    </recommendedName>
    <alternativeName>
        <fullName evidence="1">Dimethylallyl diphosphate:tRNA dimethylallyltransferase</fullName>
        <shortName evidence="1">DMAPP:tRNA dimethylallyltransferase</shortName>
        <shortName evidence="1">DMATase</shortName>
    </alternativeName>
    <alternativeName>
        <fullName evidence="1">Isopentenyl-diphosphate:tRNA isopentenyltransferase</fullName>
        <shortName evidence="1">IPP transferase</shortName>
        <shortName evidence="1">IPPT</shortName>
        <shortName evidence="1">IPTase</shortName>
    </alternativeName>
</protein>
<reference key="1">
    <citation type="journal article" date="2005" name="Genome Res.">
        <title>Genome sequence of Blochmannia pennsylvanicus indicates parallel evolutionary trends among bacterial mutualists of insects.</title>
        <authorList>
            <person name="Degnan P.H."/>
            <person name="Lazarus A.B."/>
            <person name="Wernegreen J.J."/>
        </authorList>
    </citation>
    <scope>NUCLEOTIDE SEQUENCE [LARGE SCALE GENOMIC DNA]</scope>
    <source>
        <strain>BPEN</strain>
    </source>
</reference>
<feature type="chain" id="PRO_0000377088" description="tRNA dimethylallyltransferase">
    <location>
        <begin position="1"/>
        <end position="304"/>
    </location>
</feature>
<feature type="region of interest" description="Interaction with substrate tRNA" evidence="1">
    <location>
        <begin position="28"/>
        <end position="31"/>
    </location>
</feature>
<feature type="binding site" evidence="1">
    <location>
        <begin position="2"/>
        <end position="9"/>
    </location>
    <ligand>
        <name>ATP</name>
        <dbReference type="ChEBI" id="CHEBI:30616"/>
    </ligand>
</feature>
<feature type="binding site" evidence="1">
    <location>
        <begin position="4"/>
        <end position="9"/>
    </location>
    <ligand>
        <name>substrate</name>
    </ligand>
</feature>
<feature type="site" description="Interaction with substrate tRNA" evidence="1">
    <location>
        <position position="94"/>
    </location>
</feature>
<feature type="site" description="Interaction with substrate tRNA" evidence="1">
    <location>
        <position position="116"/>
    </location>
</feature>
<accession>Q493W0</accession>
<organism>
    <name type="scientific">Blochmanniella pennsylvanica (strain BPEN)</name>
    <dbReference type="NCBI Taxonomy" id="291272"/>
    <lineage>
        <taxon>Bacteria</taxon>
        <taxon>Pseudomonadati</taxon>
        <taxon>Pseudomonadota</taxon>
        <taxon>Gammaproteobacteria</taxon>
        <taxon>Enterobacterales</taxon>
        <taxon>Enterobacteriaceae</taxon>
        <taxon>ant endosymbionts</taxon>
        <taxon>Candidatus Blochmanniella</taxon>
    </lineage>
</organism>
<dbReference type="EC" id="2.5.1.75" evidence="1"/>
<dbReference type="EMBL" id="CP000016">
    <property type="protein sequence ID" value="AAZ40724.1"/>
    <property type="molecule type" value="Genomic_DNA"/>
</dbReference>
<dbReference type="RefSeq" id="WP_011282630.1">
    <property type="nucleotide sequence ID" value="NC_007292.1"/>
</dbReference>
<dbReference type="SMR" id="Q493W0"/>
<dbReference type="STRING" id="291272.BPEN_081"/>
<dbReference type="KEGG" id="bpn:BPEN_081"/>
<dbReference type="eggNOG" id="COG0324">
    <property type="taxonomic scope" value="Bacteria"/>
</dbReference>
<dbReference type="HOGENOM" id="CLU_032616_0_0_6"/>
<dbReference type="Proteomes" id="UP000007794">
    <property type="component" value="Chromosome"/>
</dbReference>
<dbReference type="GO" id="GO:0005524">
    <property type="term" value="F:ATP binding"/>
    <property type="evidence" value="ECO:0007669"/>
    <property type="project" value="UniProtKB-UniRule"/>
</dbReference>
<dbReference type="GO" id="GO:0052381">
    <property type="term" value="F:tRNA dimethylallyltransferase activity"/>
    <property type="evidence" value="ECO:0007669"/>
    <property type="project" value="UniProtKB-UniRule"/>
</dbReference>
<dbReference type="GO" id="GO:0006400">
    <property type="term" value="P:tRNA modification"/>
    <property type="evidence" value="ECO:0007669"/>
    <property type="project" value="TreeGrafter"/>
</dbReference>
<dbReference type="FunFam" id="1.10.20.140:FF:000001">
    <property type="entry name" value="tRNA dimethylallyltransferase"/>
    <property type="match status" value="1"/>
</dbReference>
<dbReference type="Gene3D" id="1.10.20.140">
    <property type="match status" value="1"/>
</dbReference>
<dbReference type="Gene3D" id="3.40.50.300">
    <property type="entry name" value="P-loop containing nucleotide triphosphate hydrolases"/>
    <property type="match status" value="1"/>
</dbReference>
<dbReference type="HAMAP" id="MF_00185">
    <property type="entry name" value="IPP_trans"/>
    <property type="match status" value="1"/>
</dbReference>
<dbReference type="InterPro" id="IPR039657">
    <property type="entry name" value="Dimethylallyltransferase"/>
</dbReference>
<dbReference type="InterPro" id="IPR018022">
    <property type="entry name" value="IPT"/>
</dbReference>
<dbReference type="InterPro" id="IPR027417">
    <property type="entry name" value="P-loop_NTPase"/>
</dbReference>
<dbReference type="NCBIfam" id="TIGR00174">
    <property type="entry name" value="miaA"/>
    <property type="match status" value="1"/>
</dbReference>
<dbReference type="PANTHER" id="PTHR11088">
    <property type="entry name" value="TRNA DIMETHYLALLYLTRANSFERASE"/>
    <property type="match status" value="1"/>
</dbReference>
<dbReference type="PANTHER" id="PTHR11088:SF60">
    <property type="entry name" value="TRNA DIMETHYLALLYLTRANSFERASE"/>
    <property type="match status" value="1"/>
</dbReference>
<dbReference type="Pfam" id="PF01715">
    <property type="entry name" value="IPPT"/>
    <property type="match status" value="1"/>
</dbReference>
<dbReference type="SUPFAM" id="SSF52540">
    <property type="entry name" value="P-loop containing nucleoside triphosphate hydrolases"/>
    <property type="match status" value="1"/>
</dbReference>
<gene>
    <name evidence="1" type="primary">miaA</name>
    <name type="ordered locus">BPEN_081</name>
</gene>
<comment type="function">
    <text evidence="1">Catalyzes the transfer of a dimethylallyl group onto the adenine at position 37 in tRNAs that read codons beginning with uridine, leading to the formation of N6-(dimethylallyl)adenosine (i(6)A).</text>
</comment>
<comment type="catalytic activity">
    <reaction evidence="1">
        <text>adenosine(37) in tRNA + dimethylallyl diphosphate = N(6)-dimethylallyladenosine(37) in tRNA + diphosphate</text>
        <dbReference type="Rhea" id="RHEA:26482"/>
        <dbReference type="Rhea" id="RHEA-COMP:10162"/>
        <dbReference type="Rhea" id="RHEA-COMP:10375"/>
        <dbReference type="ChEBI" id="CHEBI:33019"/>
        <dbReference type="ChEBI" id="CHEBI:57623"/>
        <dbReference type="ChEBI" id="CHEBI:74411"/>
        <dbReference type="ChEBI" id="CHEBI:74415"/>
        <dbReference type="EC" id="2.5.1.75"/>
    </reaction>
</comment>
<comment type="cofactor">
    <cofactor evidence="1">
        <name>Mg(2+)</name>
        <dbReference type="ChEBI" id="CHEBI:18420"/>
    </cofactor>
</comment>
<comment type="subunit">
    <text evidence="1">Monomer.</text>
</comment>
<comment type="similarity">
    <text evidence="1">Belongs to the IPP transferase family.</text>
</comment>
<sequence>MGPTASGKTSLAIDLKKRKEKIDIISVDSALIYRDMDIGTAKPVAEELKLAPHKLINIRDPVECYSAADFYRDADNEMENIIQSEHTPFLVGGTMLYFKTLLDGLFFLPATNQKIRDDLEYEAKRTGWINIHDLLKHIDPISANKIHLNDHKRIIRALEIFFISGKTWTELKLINNQKLKYRFHQFAVVPSSRDLLYKRIEERFHRMLDIGFEDEVIKLFNRSDLHTKEVKSSISCVGYRQMWEYLSGDINYNQMIIKGICATRQLAKRQLTWLRRWPNLCWLNSDNLSAATDSISKILIEKSI</sequence>
<proteinExistence type="inferred from homology"/>